<comment type="function">
    <text>CNTF is a survival factor for various neuronal cell types. Seems to prevent the degeneration of motor axons after axotomy.</text>
</comment>
<comment type="subcellular location">
    <subcellularLocation>
        <location>Cytoplasm</location>
    </subcellularLocation>
</comment>
<comment type="tissue specificity">
    <text>Nervous system.</text>
</comment>
<comment type="similarity">
    <text evidence="1">Belongs to the CNTF family.</text>
</comment>
<evidence type="ECO:0000305" key="1"/>
<dbReference type="EMBL" id="M29828">
    <property type="protein sequence ID" value="AAA31202.1"/>
    <property type="molecule type" value="mRNA"/>
</dbReference>
<dbReference type="PIR" id="A40082">
    <property type="entry name" value="UNRBCF"/>
</dbReference>
<dbReference type="RefSeq" id="NP_001075752.1">
    <property type="nucleotide sequence ID" value="NM_001082283.1"/>
</dbReference>
<dbReference type="SMR" id="P14188"/>
<dbReference type="FunCoup" id="P14188">
    <property type="interactions" value="14"/>
</dbReference>
<dbReference type="STRING" id="9986.ENSOCUP00000004675"/>
<dbReference type="PaxDb" id="9986-ENSOCUP00000004675"/>
<dbReference type="GeneID" id="100009117"/>
<dbReference type="KEGG" id="ocu:100009117"/>
<dbReference type="CTD" id="1270"/>
<dbReference type="eggNOG" id="ENOG502S4XX">
    <property type="taxonomic scope" value="Eukaryota"/>
</dbReference>
<dbReference type="InParanoid" id="P14188"/>
<dbReference type="OrthoDB" id="9510890at2759"/>
<dbReference type="Proteomes" id="UP000001811">
    <property type="component" value="Unplaced"/>
</dbReference>
<dbReference type="GO" id="GO:0030424">
    <property type="term" value="C:axon"/>
    <property type="evidence" value="ECO:0007669"/>
    <property type="project" value="TreeGrafter"/>
</dbReference>
<dbReference type="GO" id="GO:0005737">
    <property type="term" value="C:cytoplasm"/>
    <property type="evidence" value="ECO:0007669"/>
    <property type="project" value="UniProtKB-SubCell"/>
</dbReference>
<dbReference type="GO" id="GO:0005615">
    <property type="term" value="C:extracellular space"/>
    <property type="evidence" value="ECO:0007669"/>
    <property type="project" value="TreeGrafter"/>
</dbReference>
<dbReference type="GO" id="GO:0005127">
    <property type="term" value="F:ciliary neurotrophic factor receptor binding"/>
    <property type="evidence" value="ECO:0007669"/>
    <property type="project" value="InterPro"/>
</dbReference>
<dbReference type="GO" id="GO:0005125">
    <property type="term" value="F:cytokine activity"/>
    <property type="evidence" value="ECO:0007669"/>
    <property type="project" value="TreeGrafter"/>
</dbReference>
<dbReference type="GO" id="GO:0008083">
    <property type="term" value="F:growth factor activity"/>
    <property type="evidence" value="ECO:0007669"/>
    <property type="project" value="UniProtKB-KW"/>
</dbReference>
<dbReference type="GO" id="GO:0048143">
    <property type="term" value="P:astrocyte activation"/>
    <property type="evidence" value="ECO:0007669"/>
    <property type="project" value="TreeGrafter"/>
</dbReference>
<dbReference type="GO" id="GO:0070120">
    <property type="term" value="P:ciliary neurotrophic factor-mediated signaling pathway"/>
    <property type="evidence" value="ECO:0007669"/>
    <property type="project" value="InterPro"/>
</dbReference>
<dbReference type="GO" id="GO:0043524">
    <property type="term" value="P:negative regulation of neuron apoptotic process"/>
    <property type="evidence" value="ECO:0007669"/>
    <property type="project" value="InterPro"/>
</dbReference>
<dbReference type="GO" id="GO:0048680">
    <property type="term" value="P:positive regulation of axon regeneration"/>
    <property type="evidence" value="ECO:0007669"/>
    <property type="project" value="TreeGrafter"/>
</dbReference>
<dbReference type="FunFam" id="1.20.1250.10:FF:000022">
    <property type="entry name" value="ciliary neurotrophic factor"/>
    <property type="match status" value="1"/>
</dbReference>
<dbReference type="Gene3D" id="1.20.1250.10">
    <property type="match status" value="1"/>
</dbReference>
<dbReference type="InterPro" id="IPR009079">
    <property type="entry name" value="4_helix_cytokine-like_core"/>
</dbReference>
<dbReference type="InterPro" id="IPR000151">
    <property type="entry name" value="Ciliary_neurotrophic_fac_CNTF"/>
</dbReference>
<dbReference type="PANTHER" id="PTHR15196">
    <property type="entry name" value="CILIARY NEUROTROPHIC FACTOR"/>
    <property type="match status" value="1"/>
</dbReference>
<dbReference type="PANTHER" id="PTHR15196:SF0">
    <property type="entry name" value="CILIARY NEUROTROPHIC FACTOR"/>
    <property type="match status" value="1"/>
</dbReference>
<dbReference type="Pfam" id="PF01110">
    <property type="entry name" value="CNTF"/>
    <property type="match status" value="1"/>
</dbReference>
<dbReference type="SUPFAM" id="SSF47266">
    <property type="entry name" value="4-helical cytokines"/>
    <property type="match status" value="1"/>
</dbReference>
<accession>P14188</accession>
<gene>
    <name type="primary">CNTF</name>
</gene>
<organism>
    <name type="scientific">Oryctolagus cuniculus</name>
    <name type="common">Rabbit</name>
    <dbReference type="NCBI Taxonomy" id="9986"/>
    <lineage>
        <taxon>Eukaryota</taxon>
        <taxon>Metazoa</taxon>
        <taxon>Chordata</taxon>
        <taxon>Craniata</taxon>
        <taxon>Vertebrata</taxon>
        <taxon>Euteleostomi</taxon>
        <taxon>Mammalia</taxon>
        <taxon>Eutheria</taxon>
        <taxon>Euarchontoglires</taxon>
        <taxon>Glires</taxon>
        <taxon>Lagomorpha</taxon>
        <taxon>Leporidae</taxon>
        <taxon>Oryctolagus</taxon>
    </lineage>
</organism>
<protein>
    <recommendedName>
        <fullName>Ciliary neurotrophic factor</fullName>
        <shortName>CNTF</shortName>
    </recommendedName>
</protein>
<name>CNTF_RABIT</name>
<proteinExistence type="evidence at protein level"/>
<keyword id="KW-0963">Cytoplasm</keyword>
<keyword id="KW-0217">Developmental protein</keyword>
<keyword id="KW-0221">Differentiation</keyword>
<keyword id="KW-0903">Direct protein sequencing</keyword>
<keyword id="KW-0339">Growth factor</keyword>
<keyword id="KW-0524">Neurogenesis</keyword>
<keyword id="KW-1185">Reference proteome</keyword>
<sequence>MAFMEHSALTPHRRELCSRTIWLARKIRSDLTALTESYVKHQGLNKNINLDSVDGVPMASTDQWSELTEAERLQENLQAYRTFHIMLARLLEDQQVHFTPAEGDFHQAIHTLLLQVAAFAYQIEELMVLLECNIPPKDADGTPVIGGDGLFEKKLWGLKVLQELSHWTVRSIHDLRVISCHQTGIPAHGSHYIANDKEM</sequence>
<reference key="1">
    <citation type="journal article" date="1989" name="Science">
        <title>Purification, cloning, and expression of ciliary neurotrophic factor (CNTF).</title>
        <authorList>
            <person name="Lin L.-F.H."/>
            <person name="Mismer D."/>
            <person name="Lile J.D."/>
            <person name="Armes L.G."/>
            <person name="Butler E.T. III"/>
            <person name="Vannice J.L."/>
            <person name="Collins F."/>
        </authorList>
    </citation>
    <scope>NUCLEOTIDE SEQUENCE [MRNA]</scope>
    <scope>PARTIAL PROTEIN SEQUENCE</scope>
</reference>
<reference key="2">
    <citation type="journal article" date="1990" name="J. Biol. Chem.">
        <title>Isolation and characterization of ciliary neurotrophic factor from rabbit sciatic nerves.</title>
        <authorList>
            <person name="Lin L.-F.H."/>
            <person name="Armes L.G."/>
            <person name="Sommer A."/>
            <person name="Smith D.J."/>
            <person name="Collins F."/>
        </authorList>
    </citation>
    <scope>PARTIAL PROTEIN SEQUENCE</scope>
</reference>
<feature type="chain" id="PRO_0000149522" description="Ciliary neurotrophic factor">
    <location>
        <begin position="1"/>
        <end position="199"/>
    </location>
</feature>